<gene>
    <name evidence="1" type="primary">rpmB</name>
    <name type="ordered locus">CJJ81176_0475</name>
</gene>
<dbReference type="EMBL" id="CP000538">
    <property type="protein sequence ID" value="EAQ73141.1"/>
    <property type="molecule type" value="Genomic_DNA"/>
</dbReference>
<dbReference type="RefSeq" id="WP_002854974.1">
    <property type="nucleotide sequence ID" value="NC_008787.1"/>
</dbReference>
<dbReference type="SMR" id="A1VYG6"/>
<dbReference type="KEGG" id="cjj:CJJ81176_0475"/>
<dbReference type="eggNOG" id="COG0227">
    <property type="taxonomic scope" value="Bacteria"/>
</dbReference>
<dbReference type="HOGENOM" id="CLU_064548_7_2_7"/>
<dbReference type="Proteomes" id="UP000000646">
    <property type="component" value="Chromosome"/>
</dbReference>
<dbReference type="GO" id="GO:1990904">
    <property type="term" value="C:ribonucleoprotein complex"/>
    <property type="evidence" value="ECO:0007669"/>
    <property type="project" value="UniProtKB-KW"/>
</dbReference>
<dbReference type="GO" id="GO:0005840">
    <property type="term" value="C:ribosome"/>
    <property type="evidence" value="ECO:0007669"/>
    <property type="project" value="UniProtKB-KW"/>
</dbReference>
<dbReference type="GO" id="GO:0003735">
    <property type="term" value="F:structural constituent of ribosome"/>
    <property type="evidence" value="ECO:0007669"/>
    <property type="project" value="InterPro"/>
</dbReference>
<dbReference type="GO" id="GO:0006412">
    <property type="term" value="P:translation"/>
    <property type="evidence" value="ECO:0007669"/>
    <property type="project" value="UniProtKB-UniRule"/>
</dbReference>
<dbReference type="Gene3D" id="2.20.150.30">
    <property type="match status" value="1"/>
</dbReference>
<dbReference type="Gene3D" id="2.30.170.40">
    <property type="entry name" value="Ribosomal protein L28/L24"/>
    <property type="match status" value="1"/>
</dbReference>
<dbReference type="HAMAP" id="MF_00373">
    <property type="entry name" value="Ribosomal_bL28"/>
    <property type="match status" value="1"/>
</dbReference>
<dbReference type="InterPro" id="IPR050096">
    <property type="entry name" value="Bacterial_rp_bL28"/>
</dbReference>
<dbReference type="InterPro" id="IPR026569">
    <property type="entry name" value="Ribosomal_bL28"/>
</dbReference>
<dbReference type="InterPro" id="IPR034704">
    <property type="entry name" value="Ribosomal_bL28/bL31-like_sf"/>
</dbReference>
<dbReference type="InterPro" id="IPR001383">
    <property type="entry name" value="Ribosomal_bL28_bact-type"/>
</dbReference>
<dbReference type="InterPro" id="IPR037147">
    <property type="entry name" value="Ribosomal_bL28_sf"/>
</dbReference>
<dbReference type="NCBIfam" id="TIGR00009">
    <property type="entry name" value="L28"/>
    <property type="match status" value="1"/>
</dbReference>
<dbReference type="PANTHER" id="PTHR39080">
    <property type="entry name" value="50S RIBOSOMAL PROTEIN L28"/>
    <property type="match status" value="1"/>
</dbReference>
<dbReference type="PANTHER" id="PTHR39080:SF1">
    <property type="entry name" value="LARGE RIBOSOMAL SUBUNIT PROTEIN BL28A"/>
    <property type="match status" value="1"/>
</dbReference>
<dbReference type="Pfam" id="PF00830">
    <property type="entry name" value="Ribosomal_L28"/>
    <property type="match status" value="1"/>
</dbReference>
<dbReference type="SUPFAM" id="SSF143800">
    <property type="entry name" value="L28p-like"/>
    <property type="match status" value="1"/>
</dbReference>
<protein>
    <recommendedName>
        <fullName evidence="1">Large ribosomal subunit protein bL28</fullName>
    </recommendedName>
    <alternativeName>
        <fullName evidence="2">50S ribosomal protein L28</fullName>
    </alternativeName>
</protein>
<feature type="chain" id="PRO_1000007202" description="Large ribosomal subunit protein bL28">
    <location>
        <begin position="1"/>
        <end position="64"/>
    </location>
</feature>
<accession>A1VYG6</accession>
<organism>
    <name type="scientific">Campylobacter jejuni subsp. jejuni serotype O:23/36 (strain 81-176)</name>
    <dbReference type="NCBI Taxonomy" id="354242"/>
    <lineage>
        <taxon>Bacteria</taxon>
        <taxon>Pseudomonadati</taxon>
        <taxon>Campylobacterota</taxon>
        <taxon>Epsilonproteobacteria</taxon>
        <taxon>Campylobacterales</taxon>
        <taxon>Campylobacteraceae</taxon>
        <taxon>Campylobacter</taxon>
    </lineage>
</organism>
<sequence length="64" mass="7195">MARVCQITGKGPMVGNNVSHANNKTKRRFLPNLRTVRVTLEDGTTRKMRIAASTLRTLKKQNSK</sequence>
<keyword id="KW-0687">Ribonucleoprotein</keyword>
<keyword id="KW-0689">Ribosomal protein</keyword>
<reference key="1">
    <citation type="submission" date="2006-12" db="EMBL/GenBank/DDBJ databases">
        <authorList>
            <person name="Fouts D.E."/>
            <person name="Nelson K.E."/>
            <person name="Sebastian Y."/>
        </authorList>
    </citation>
    <scope>NUCLEOTIDE SEQUENCE [LARGE SCALE GENOMIC DNA]</scope>
    <source>
        <strain>81-176</strain>
    </source>
</reference>
<comment type="similarity">
    <text evidence="1">Belongs to the bacterial ribosomal protein bL28 family.</text>
</comment>
<name>RL28_CAMJJ</name>
<evidence type="ECO:0000255" key="1">
    <source>
        <dbReference type="HAMAP-Rule" id="MF_00373"/>
    </source>
</evidence>
<evidence type="ECO:0000305" key="2"/>
<proteinExistence type="inferred from homology"/>